<proteinExistence type="evidence at transcript level"/>
<name>A421_LOXLA</name>
<feature type="chain" id="PRO_0000392839" description="Dermonecrotic toxin LlSicTox-alphaIV2i">
    <location>
        <begin position="1" status="less than"/>
        <end position="276"/>
    </location>
</feature>
<feature type="active site" evidence="5">
    <location>
        <position position="5"/>
    </location>
</feature>
<feature type="active site" description="Nucleophile" evidence="5">
    <location>
        <position position="41"/>
    </location>
</feature>
<feature type="binding site" evidence="5">
    <location>
        <position position="25"/>
    </location>
    <ligand>
        <name>Mg(2+)</name>
        <dbReference type="ChEBI" id="CHEBI:18420"/>
    </ligand>
</feature>
<feature type="binding site" evidence="5">
    <location>
        <position position="27"/>
    </location>
    <ligand>
        <name>Mg(2+)</name>
        <dbReference type="ChEBI" id="CHEBI:18420"/>
    </ligand>
</feature>
<feature type="binding site" evidence="5">
    <location>
        <position position="85"/>
    </location>
    <ligand>
        <name>Mg(2+)</name>
        <dbReference type="ChEBI" id="CHEBI:18420"/>
    </ligand>
</feature>
<feature type="disulfide bond" evidence="3">
    <location>
        <begin position="45"/>
        <end position="51"/>
    </location>
</feature>
<feature type="disulfide bond" evidence="3">
    <location>
        <begin position="47"/>
        <end position="193"/>
    </location>
</feature>
<feature type="non-terminal residue">
    <location>
        <position position="1"/>
    </location>
</feature>
<accession>C0JB25</accession>
<comment type="function">
    <text evidence="1 3">Dermonecrotic toxins cleave the phosphodiester linkage between the phosphate and headgroup of certain phospholipids (sphingolipid and lysolipid substrates), forming an alcohol (often choline) and a cyclic phosphate (By similarity). This toxin acts on sphingomyelin (SM) (By similarity). It may also act on ceramide phosphoethanolamine (CPE), lysophosphatidylcholine (LPC) and lysophosphatidylethanolamine (LPE), but not on lysophosphatidylserine (LPS), and lysophosphatidylglycerol (LPG) (By similarity). It acts by transphosphatidylation, releasing exclusively cyclic phosphate products as second products (By similarity). Induces dermonecrosis, hemolysis, increased vascular permeability, edema, inflammatory response, and platelet aggregation (By similarity).</text>
</comment>
<comment type="catalytic activity">
    <reaction evidence="1">
        <text>an N-(acyl)-sphingosylphosphocholine = an N-(acyl)-sphingosyl-1,3-cyclic phosphate + choline</text>
        <dbReference type="Rhea" id="RHEA:60652"/>
        <dbReference type="ChEBI" id="CHEBI:15354"/>
        <dbReference type="ChEBI" id="CHEBI:64583"/>
        <dbReference type="ChEBI" id="CHEBI:143892"/>
    </reaction>
</comment>
<comment type="catalytic activity">
    <reaction evidence="1">
        <text>an N-(acyl)-sphingosylphosphoethanolamine = an N-(acyl)-sphingosyl-1,3-cyclic phosphate + ethanolamine</text>
        <dbReference type="Rhea" id="RHEA:60648"/>
        <dbReference type="ChEBI" id="CHEBI:57603"/>
        <dbReference type="ChEBI" id="CHEBI:143891"/>
        <dbReference type="ChEBI" id="CHEBI:143892"/>
    </reaction>
</comment>
<comment type="catalytic activity">
    <reaction evidence="1">
        <text>a 1-acyl-sn-glycero-3-phosphocholine = a 1-acyl-sn-glycero-2,3-cyclic phosphate + choline</text>
        <dbReference type="Rhea" id="RHEA:60700"/>
        <dbReference type="ChEBI" id="CHEBI:15354"/>
        <dbReference type="ChEBI" id="CHEBI:58168"/>
        <dbReference type="ChEBI" id="CHEBI:143947"/>
    </reaction>
</comment>
<comment type="catalytic activity">
    <reaction evidence="1">
        <text>a 1-acyl-sn-glycero-3-phosphoethanolamine = a 1-acyl-sn-glycero-2,3-cyclic phosphate + ethanolamine</text>
        <dbReference type="Rhea" id="RHEA:60704"/>
        <dbReference type="ChEBI" id="CHEBI:57603"/>
        <dbReference type="ChEBI" id="CHEBI:64381"/>
        <dbReference type="ChEBI" id="CHEBI:143947"/>
    </reaction>
</comment>
<comment type="cofactor">
    <cofactor evidence="5">
        <name>Mg(2+)</name>
        <dbReference type="ChEBI" id="CHEBI:18420"/>
    </cofactor>
    <text evidence="5">Binds 1 Mg(2+) ion per subunit.</text>
</comment>
<comment type="subcellular location">
    <subcellularLocation>
        <location evidence="8">Secreted</location>
    </subcellularLocation>
</comment>
<comment type="tissue specificity">
    <text evidence="8">Expressed by the venom gland.</text>
</comment>
<comment type="similarity">
    <text evidence="7">Belongs to the arthropod phospholipase D family. Class II subfamily.</text>
</comment>
<comment type="caution">
    <text evidence="1 2 4">The most common activity assay for dermonecrotic toxins detects enzymatic activity by monitoring choline release from substrate. Liberation of choline from sphingomyelin (SM) or lysophosphatidylcholine (LPC) is commonly assumed to result from substrate hydrolysis, giving either ceramide-1-phosphate (C1P) or lysophosphatidic acid (LPA), respectively, as a second product. However, two studies from Lajoie and colleagues (2013 and 2015) report the observation of exclusive formation of cyclic phosphate products as second products, resulting from intramolecular transphosphatidylation. Cyclic phosphates have vastly different biological properties from their monoester counterparts, and they may be relevant to the pathology of brown spider envenomation.</text>
</comment>
<organism>
    <name type="scientific">Loxosceles laeta</name>
    <name type="common">South American recluse spider</name>
    <name type="synonym">Scytodes laeta</name>
    <dbReference type="NCBI Taxonomy" id="58217"/>
    <lineage>
        <taxon>Eukaryota</taxon>
        <taxon>Metazoa</taxon>
        <taxon>Ecdysozoa</taxon>
        <taxon>Arthropoda</taxon>
        <taxon>Chelicerata</taxon>
        <taxon>Arachnida</taxon>
        <taxon>Araneae</taxon>
        <taxon>Araneomorphae</taxon>
        <taxon>Haplogynae</taxon>
        <taxon>Scytodoidea</taxon>
        <taxon>Sicariidae</taxon>
        <taxon>Loxosceles</taxon>
    </lineage>
</organism>
<sequence>WIMGHMVNKIEQINEFLDLGANSIEVDIAFDELGYPEYTYHGVPCDCKRYCTKSEKIDDFIEALSAATTPGNPKFRKELTLVVFDLKTGGFDASRMYKSGKAFAELIQFSYWKGSDDAGRAYIVLSLPKLDHYEFIKAFREHFDTSTFKNLLEERVGYDFSGNEDMGLTRVVLNKAGVNDREHVWQGDGITNCILRSLDRVKAAVAIRDSATGYINKVCFWTIQAYSSVRDALNAEVDGIMTNEPGVIANVLKEDAFKDRFRLATYRDNPWETFKR</sequence>
<evidence type="ECO:0000250" key="1">
    <source>
        <dbReference type="UniProtKB" id="A0A0D4WTV1"/>
    </source>
</evidence>
<evidence type="ECO:0000250" key="2">
    <source>
        <dbReference type="UniProtKB" id="A0A0D4WV12"/>
    </source>
</evidence>
<evidence type="ECO:0000250" key="3">
    <source>
        <dbReference type="UniProtKB" id="P0CE80"/>
    </source>
</evidence>
<evidence type="ECO:0000250" key="4">
    <source>
        <dbReference type="UniProtKB" id="Q4ZFU2"/>
    </source>
</evidence>
<evidence type="ECO:0000250" key="5">
    <source>
        <dbReference type="UniProtKB" id="Q8I914"/>
    </source>
</evidence>
<evidence type="ECO:0000303" key="6">
    <source>
    </source>
</evidence>
<evidence type="ECO:0000305" key="7"/>
<evidence type="ECO:0000305" key="8">
    <source>
    </source>
</evidence>
<dbReference type="EC" id="4.6.1.-" evidence="4"/>
<dbReference type="EMBL" id="FJ171460">
    <property type="protein sequence ID" value="ACN48956.1"/>
    <property type="molecule type" value="mRNA"/>
</dbReference>
<dbReference type="SMR" id="C0JB25"/>
<dbReference type="GO" id="GO:0005576">
    <property type="term" value="C:extracellular region"/>
    <property type="evidence" value="ECO:0007669"/>
    <property type="project" value="UniProtKB-SubCell"/>
</dbReference>
<dbReference type="GO" id="GO:0016829">
    <property type="term" value="F:lyase activity"/>
    <property type="evidence" value="ECO:0007669"/>
    <property type="project" value="UniProtKB-KW"/>
</dbReference>
<dbReference type="GO" id="GO:0046872">
    <property type="term" value="F:metal ion binding"/>
    <property type="evidence" value="ECO:0007669"/>
    <property type="project" value="UniProtKB-KW"/>
</dbReference>
<dbReference type="GO" id="GO:0008081">
    <property type="term" value="F:phosphoric diester hydrolase activity"/>
    <property type="evidence" value="ECO:0007669"/>
    <property type="project" value="InterPro"/>
</dbReference>
<dbReference type="GO" id="GO:0090729">
    <property type="term" value="F:toxin activity"/>
    <property type="evidence" value="ECO:0007669"/>
    <property type="project" value="UniProtKB-KW"/>
</dbReference>
<dbReference type="GO" id="GO:0031640">
    <property type="term" value="P:killing of cells of another organism"/>
    <property type="evidence" value="ECO:0007669"/>
    <property type="project" value="UniProtKB-KW"/>
</dbReference>
<dbReference type="GO" id="GO:0016042">
    <property type="term" value="P:lipid catabolic process"/>
    <property type="evidence" value="ECO:0007669"/>
    <property type="project" value="UniProtKB-KW"/>
</dbReference>
<dbReference type="CDD" id="cd08576">
    <property type="entry name" value="GDPD_like_SMaseD_PLD"/>
    <property type="match status" value="1"/>
</dbReference>
<dbReference type="Gene3D" id="3.20.20.190">
    <property type="entry name" value="Phosphatidylinositol (PI) phosphodiesterase"/>
    <property type="match status" value="1"/>
</dbReference>
<dbReference type="InterPro" id="IPR017946">
    <property type="entry name" value="PLC-like_Pdiesterase_TIM-brl"/>
</dbReference>
<dbReference type="SUPFAM" id="SSF51695">
    <property type="entry name" value="PLC-like phosphodiesterases"/>
    <property type="match status" value="1"/>
</dbReference>
<keyword id="KW-0204">Cytolysis</keyword>
<keyword id="KW-1061">Dermonecrotic toxin</keyword>
<keyword id="KW-1015">Disulfide bond</keyword>
<keyword id="KW-0354">Hemolysis</keyword>
<keyword id="KW-0442">Lipid degradation</keyword>
<keyword id="KW-0443">Lipid metabolism</keyword>
<keyword id="KW-0456">Lyase</keyword>
<keyword id="KW-0460">Magnesium</keyword>
<keyword id="KW-0479">Metal-binding</keyword>
<keyword id="KW-0964">Secreted</keyword>
<keyword id="KW-0800">Toxin</keyword>
<protein>
    <recommendedName>
        <fullName evidence="6">Dermonecrotic toxin LlSicTox-alphaIV2i</fullName>
        <ecNumber evidence="4">4.6.1.-</ecNumber>
    </recommendedName>
    <alternativeName>
        <fullName>Phospholipase D</fullName>
        <shortName>PLD</shortName>
    </alternativeName>
    <alternativeName>
        <fullName>Sphingomyelin phosphodiesterase D</fullName>
        <shortName>SMD</shortName>
        <shortName>SMase D</shortName>
        <shortName>Sphingomyelinase D</shortName>
    </alternativeName>
</protein>
<reference key="1">
    <citation type="journal article" date="2009" name="Mol. Biol. Evol.">
        <title>Molecular evolution, functional variation, and proposed nomenclature of the gene family that includes sphingomyelinase D in sicariid spider venoms.</title>
        <authorList>
            <person name="Binford G.J."/>
            <person name="Bodner M.R."/>
            <person name="Cordes M.H."/>
            <person name="Baldwin K.L."/>
            <person name="Rynerson M.R."/>
            <person name="Burns S.N."/>
            <person name="Zobel-Thropp P.A."/>
        </authorList>
    </citation>
    <scope>NUCLEOTIDE SEQUENCE [MRNA]</scope>
    <scope>NOMENCLATURE</scope>
    <source>
        <tissue>Venom gland</tissue>
    </source>
</reference>